<proteinExistence type="inferred from homology"/>
<dbReference type="EC" id="3.1.1.45"/>
<dbReference type="EMBL" id="M35097">
    <property type="protein sequence ID" value="AAA98264.1"/>
    <property type="molecule type" value="Genomic_DNA"/>
</dbReference>
<dbReference type="EMBL" id="AY365053">
    <property type="protein sequence ID" value="AAR31037.1"/>
    <property type="molecule type" value="Genomic_DNA"/>
</dbReference>
<dbReference type="EMBL" id="CP000093">
    <property type="protein sequence ID" value="AAZ65762.1"/>
    <property type="molecule type" value="Genomic_DNA"/>
</dbReference>
<dbReference type="PIR" id="C35255">
    <property type="entry name" value="C35255"/>
</dbReference>
<dbReference type="RefSeq" id="WP_011178384.1">
    <property type="nucleotide sequence ID" value="NZ_AY365053.1"/>
</dbReference>
<dbReference type="SMR" id="P27136"/>
<dbReference type="ESTHER" id="alceu-tfe1">
    <property type="family name" value="Dienelactone_hydrolase"/>
</dbReference>
<dbReference type="KEGG" id="reu:Reut_D6464"/>
<dbReference type="HOGENOM" id="CLU_054590_7_3_4"/>
<dbReference type="OrthoDB" id="62567at2"/>
<dbReference type="BioCyc" id="MetaCyc:MONOMER-14412"/>
<dbReference type="UniPathway" id="UPA00083"/>
<dbReference type="GO" id="GO:0008806">
    <property type="term" value="F:carboxymethylenebutenolidase activity"/>
    <property type="evidence" value="ECO:0007669"/>
    <property type="project" value="UniProtKB-EC"/>
</dbReference>
<dbReference type="GO" id="GO:0009056">
    <property type="term" value="P:catabolic process"/>
    <property type="evidence" value="ECO:0007669"/>
    <property type="project" value="UniProtKB-KW"/>
</dbReference>
<dbReference type="Gene3D" id="3.40.50.1820">
    <property type="entry name" value="alpha/beta hydrolase"/>
    <property type="match status" value="1"/>
</dbReference>
<dbReference type="InterPro" id="IPR029058">
    <property type="entry name" value="AB_hydrolase_fold"/>
</dbReference>
<dbReference type="InterPro" id="IPR002925">
    <property type="entry name" value="Dienelactn_hydro"/>
</dbReference>
<dbReference type="InterPro" id="IPR051049">
    <property type="entry name" value="Dienelactone_hydrolase-like"/>
</dbReference>
<dbReference type="PANTHER" id="PTHR46623:SF6">
    <property type="entry name" value="ALPHA_BETA-HYDROLASES SUPERFAMILY PROTEIN"/>
    <property type="match status" value="1"/>
</dbReference>
<dbReference type="PANTHER" id="PTHR46623">
    <property type="entry name" value="CARBOXYMETHYLENEBUTENOLIDASE-RELATED"/>
    <property type="match status" value="1"/>
</dbReference>
<dbReference type="Pfam" id="PF01738">
    <property type="entry name" value="DLH"/>
    <property type="match status" value="1"/>
</dbReference>
<dbReference type="SUPFAM" id="SSF53474">
    <property type="entry name" value="alpha/beta-Hydrolases"/>
    <property type="match status" value="1"/>
</dbReference>
<geneLocation type="plasmid">
    <name>pJP4</name>
</geneLocation>
<geneLocation type="plasmid">
    <name>pPJ4</name>
</geneLocation>
<accession>P27136</accession>
<accession>Q46M68</accession>
<organism>
    <name type="scientific">Cupriavidus pinatubonensis (strain JMP 134 / LMG 1197)</name>
    <name type="common">Cupriavidus necator (strain JMP 134)</name>
    <dbReference type="NCBI Taxonomy" id="264198"/>
    <lineage>
        <taxon>Bacteria</taxon>
        <taxon>Pseudomonadati</taxon>
        <taxon>Pseudomonadota</taxon>
        <taxon>Betaproteobacteria</taxon>
        <taxon>Burkholderiales</taxon>
        <taxon>Burkholderiaceae</taxon>
        <taxon>Cupriavidus</taxon>
    </lineage>
</organism>
<feature type="chain" id="PRO_0000161574" description="Carboxymethylenebutenolidase 1">
    <location>
        <begin position="1"/>
        <end position="234"/>
    </location>
</feature>
<feature type="active site" evidence="1">
    <location>
        <position position="123"/>
    </location>
</feature>
<feature type="active site" evidence="1">
    <location>
        <position position="171"/>
    </location>
</feature>
<feature type="active site" evidence="1">
    <location>
        <position position="201"/>
    </location>
</feature>
<keyword id="KW-0058">Aromatic hydrocarbons catabolism</keyword>
<keyword id="KW-0378">Hydrolase</keyword>
<keyword id="KW-0614">Plasmid</keyword>
<keyword id="KW-0719">Serine esterase</keyword>
<protein>
    <recommendedName>
        <fullName>Carboxymethylenebutenolidase 1</fullName>
        <ecNumber>3.1.1.45</ecNumber>
    </recommendedName>
    <alternativeName>
        <fullName>Carboxymethylenebutenolidase I</fullName>
    </alternativeName>
    <alternativeName>
        <fullName>Dienelactone hydrolase I</fullName>
        <shortName>DLH I</shortName>
    </alternativeName>
</protein>
<gene>
    <name type="primary">tfdEI</name>
    <name type="synonym">tfdE</name>
    <name type="ordered locus">Reut_D6464</name>
</gene>
<name>TFDE1_CUPPJ</name>
<sequence>MLSDGVEITSRSGGRFGAYLGKPTTDSAPIVVIAQEIFGITPFIRETVEWLVGAGFGCVCPDLYWRQAPNIELDANVPSEREQALALFRDFDMEAGVNDLSCAIEYARALPFSNGRVAVVGYCLGGALAFDVAARSLADCSIGYYGVGLEKKVSLVPAITRPAMFHMGTKDHYVTEEARSILEEHFGRNKNLSLHWYPVGHSFARSSSPNFDQAATTVANARTLELLAMLKDPS</sequence>
<reference key="1">
    <citation type="journal article" date="1990" name="J. Bacteriol.">
        <title>Organization and sequence analysis of the 2,4-dichlorophenol hydroxylase and dichlorocatechol oxidative operons of plasmid pJP4.</title>
        <authorList>
            <person name="Perkins E.J."/>
            <person name="Gordon M.P."/>
            <person name="Caceres O."/>
            <person name="Lurquin P.F."/>
        </authorList>
    </citation>
    <scope>NUCLEOTIDE SEQUENCE [GENOMIC DNA]</scope>
    <source>
        <plasmid>pJP4</plasmid>
    </source>
</reference>
<reference key="2">
    <citation type="journal article" date="2004" name="Environ. Microbiol.">
        <title>Genetic organization of the catabolic plasmid pJP4 from Ralstonia eutropha JMP134 (pJP4) reveals mechanisms of adaptation to chloroaromatic pollutants and evolution of specialized chloroaromatic degradation pathways.</title>
        <authorList>
            <person name="Trefault N."/>
            <person name="De la Iglesia R."/>
            <person name="Molina A.M."/>
            <person name="Manzano M."/>
            <person name="Ledger T."/>
            <person name="Perez-Pantoja D."/>
            <person name="Sanchez M.A."/>
            <person name="Stuardo M."/>
            <person name="Gonzalez B."/>
        </authorList>
    </citation>
    <scope>NUCLEOTIDE SEQUENCE [GENOMIC DNA]</scope>
    <source>
        <plasmid>pJP4</plasmid>
    </source>
</reference>
<reference key="3">
    <citation type="journal article" date="2010" name="PLoS ONE">
        <title>The complete multipartite genome sequence of Cupriavidus necator JMP134, a versatile pollutant degrader.</title>
        <authorList>
            <person name="Lykidis A."/>
            <person name="Perez-Pantoja D."/>
            <person name="Ledger T."/>
            <person name="Mavromatis K."/>
            <person name="Anderson I.J."/>
            <person name="Ivanova N.N."/>
            <person name="Hooper S.D."/>
            <person name="Lapidus A."/>
            <person name="Lucas S."/>
            <person name="Gonzalez B."/>
            <person name="Kyrpides N.C."/>
        </authorList>
    </citation>
    <scope>NUCLEOTIDE SEQUENCE [LARGE SCALE GENOMIC DNA]</scope>
    <source>
        <strain>JMP134 / LMG 1197</strain>
        <plasmid>pPJ4</plasmid>
    </source>
</reference>
<comment type="function">
    <text>Ring cleavage of cyclic ester dienelactone to produce maleylacetate.</text>
</comment>
<comment type="catalytic activity">
    <reaction>
        <text>2-(5-oxo-2,5-dihydrofuran-2-ylidene)acetate + H2O = 4-oxohex-2-enedioate + H(+)</text>
        <dbReference type="Rhea" id="RHEA:12372"/>
        <dbReference type="ChEBI" id="CHEBI:12040"/>
        <dbReference type="ChEBI" id="CHEBI:15377"/>
        <dbReference type="ChEBI" id="CHEBI:15378"/>
        <dbReference type="ChEBI" id="CHEBI:57263"/>
        <dbReference type="EC" id="3.1.1.45"/>
    </reaction>
</comment>
<comment type="pathway">
    <text>Aromatic compound metabolism; 3-chlorocatechol degradation.</text>
</comment>
<comment type="subunit">
    <text>Monomer.</text>
</comment>
<comment type="miscellaneous">
    <text>Carboxymethylenebutenolidase is specific for dienelactone and has no activity toward enol-lactones.</text>
</comment>
<comment type="similarity">
    <text evidence="2">Belongs to the dienelactone hydrolase family.</text>
</comment>
<evidence type="ECO:0000250" key="1"/>
<evidence type="ECO:0000305" key="2"/>